<feature type="signal peptide" evidence="1">
    <location>
        <begin position="1"/>
        <end position="27"/>
    </location>
</feature>
<feature type="chain" id="PRO_0000032981" description="Somatotropin">
    <location>
        <begin position="28"/>
        <end position="217"/>
    </location>
</feature>
<feature type="binding site" evidence="1">
    <location>
        <position position="46"/>
    </location>
    <ligand>
        <name>Zn(2+)</name>
        <dbReference type="ChEBI" id="CHEBI:29105"/>
    </ligand>
</feature>
<feature type="binding site" evidence="1">
    <location>
        <position position="199"/>
    </location>
    <ligand>
        <name>Zn(2+)</name>
        <dbReference type="ChEBI" id="CHEBI:29105"/>
    </ligand>
</feature>
<feature type="modified residue" description="Phosphoserine" evidence="2">
    <location>
        <position position="132"/>
    </location>
</feature>
<feature type="disulfide bond" evidence="1">
    <location>
        <begin position="79"/>
        <end position="190"/>
    </location>
</feature>
<feature type="disulfide bond" evidence="1">
    <location>
        <begin position="207"/>
        <end position="215"/>
    </location>
</feature>
<sequence length="217" mass="24558">MMAAGPRASLLLAFALLCLPWTQEVGAFPAMSLSGLFANAVLRAQHLHQLAADTFKEFERTYIPEGQRYSIQNTQVAFCFSETIPAPTGKNEAQQKSDLELLRISLLLIQSWLGPLQFLSRVFTNSLVFGTSDRVYEKLKDLEEGILALMRELEDGTPRAGQILKQTYDKFDTNMRSDDALLKNYGLLSCFRKDLHKTETYLRVMKCRRFGEASCAF</sequence>
<organism>
    <name type="scientific">Cervus elaphus</name>
    <name type="common">Red deer</name>
    <dbReference type="NCBI Taxonomy" id="9860"/>
    <lineage>
        <taxon>Eukaryota</taxon>
        <taxon>Metazoa</taxon>
        <taxon>Chordata</taxon>
        <taxon>Craniata</taxon>
        <taxon>Vertebrata</taxon>
        <taxon>Euteleostomi</taxon>
        <taxon>Mammalia</taxon>
        <taxon>Eutheria</taxon>
        <taxon>Laurasiatheria</taxon>
        <taxon>Artiodactyla</taxon>
        <taxon>Ruminantia</taxon>
        <taxon>Pecora</taxon>
        <taxon>Cervidae</taxon>
        <taxon>Cervinae</taxon>
        <taxon>Cervus</taxon>
    </lineage>
</organism>
<name>SOMA_CEREL</name>
<gene>
    <name type="primary">GH1</name>
</gene>
<proteinExistence type="inferred from homology"/>
<evidence type="ECO:0000250" key="1"/>
<evidence type="ECO:0000250" key="2">
    <source>
        <dbReference type="UniProtKB" id="P01241"/>
    </source>
</evidence>
<evidence type="ECO:0000305" key="3"/>
<reference key="1">
    <citation type="journal article" date="1997" name="J. Mol. Endocrinol.">
        <title>Cloning and characterisation of the gene encoding red deer (Cervus elaphus) growth hormone: implications for the molecular evolution of growth hormone in artiodactyls.</title>
        <authorList>
            <person name="Lioupis A."/>
            <person name="Wallis O.C."/>
            <person name="Wallis M."/>
        </authorList>
    </citation>
    <scope>NUCLEOTIDE SEQUENCE [GENOMIC DNA]</scope>
    <source>
        <tissue>Tongue</tissue>
    </source>
</reference>
<accession>P56437</accession>
<protein>
    <recommendedName>
        <fullName>Somatotropin</fullName>
    </recommendedName>
    <alternativeName>
        <fullName>Growth hormone</fullName>
    </alternativeName>
</protein>
<comment type="function">
    <text evidence="1">Plays an important role in growth control. Its major role in stimulating body growth is to stimulate the liver and other tissues to secrete IGF1. It stimulates both the differentiation and proliferation of myoblasts. It also stimulates amino acid uptake and protein synthesis in muscle and other tissues (By similarity).</text>
</comment>
<comment type="subcellular location">
    <subcellularLocation>
        <location>Secreted</location>
    </subcellularLocation>
</comment>
<comment type="similarity">
    <text evidence="3">Belongs to the somatotropin/prolactin family.</text>
</comment>
<keyword id="KW-1015">Disulfide bond</keyword>
<keyword id="KW-0372">Hormone</keyword>
<keyword id="KW-0479">Metal-binding</keyword>
<keyword id="KW-0597">Phosphoprotein</keyword>
<keyword id="KW-0964">Secreted</keyword>
<keyword id="KW-0732">Signal</keyword>
<keyword id="KW-0862">Zinc</keyword>
<dbReference type="EMBL" id="Y12578">
    <property type="protein sequence ID" value="CAA73158.1"/>
    <property type="molecule type" value="Genomic_DNA"/>
</dbReference>
<dbReference type="BMRB" id="P56437"/>
<dbReference type="SMR" id="P56437"/>
<dbReference type="GO" id="GO:0005615">
    <property type="term" value="C:extracellular space"/>
    <property type="evidence" value="ECO:0000250"/>
    <property type="project" value="AgBase"/>
</dbReference>
<dbReference type="GO" id="GO:0008083">
    <property type="term" value="F:growth factor activity"/>
    <property type="evidence" value="ECO:0007669"/>
    <property type="project" value="TreeGrafter"/>
</dbReference>
<dbReference type="GO" id="GO:0005131">
    <property type="term" value="F:growth hormone receptor binding"/>
    <property type="evidence" value="ECO:0007669"/>
    <property type="project" value="InterPro"/>
</dbReference>
<dbReference type="GO" id="GO:0005179">
    <property type="term" value="F:hormone activity"/>
    <property type="evidence" value="ECO:0007669"/>
    <property type="project" value="UniProtKB-KW"/>
</dbReference>
<dbReference type="GO" id="GO:0046872">
    <property type="term" value="F:metal ion binding"/>
    <property type="evidence" value="ECO:0007669"/>
    <property type="project" value="UniProtKB-KW"/>
</dbReference>
<dbReference type="GO" id="GO:0048513">
    <property type="term" value="P:animal organ development"/>
    <property type="evidence" value="ECO:0007669"/>
    <property type="project" value="TreeGrafter"/>
</dbReference>
<dbReference type="GO" id="GO:0060396">
    <property type="term" value="P:growth hormone receptor signaling pathway"/>
    <property type="evidence" value="ECO:0007669"/>
    <property type="project" value="TreeGrafter"/>
</dbReference>
<dbReference type="GO" id="GO:0030073">
    <property type="term" value="P:insulin secretion"/>
    <property type="evidence" value="ECO:0000250"/>
    <property type="project" value="AgBase"/>
</dbReference>
<dbReference type="GO" id="GO:0045927">
    <property type="term" value="P:positive regulation of growth"/>
    <property type="evidence" value="ECO:0007669"/>
    <property type="project" value="TreeGrafter"/>
</dbReference>
<dbReference type="GO" id="GO:0046427">
    <property type="term" value="P:positive regulation of receptor signaling pathway via JAK-STAT"/>
    <property type="evidence" value="ECO:0007669"/>
    <property type="project" value="TreeGrafter"/>
</dbReference>
<dbReference type="GO" id="GO:0031667">
    <property type="term" value="P:response to nutrient levels"/>
    <property type="evidence" value="ECO:0007669"/>
    <property type="project" value="TreeGrafter"/>
</dbReference>
<dbReference type="CDD" id="cd10285">
    <property type="entry name" value="somatotropin_like"/>
    <property type="match status" value="1"/>
</dbReference>
<dbReference type="FunFam" id="1.20.1250.10:FF:000002">
    <property type="entry name" value="Growth hormone"/>
    <property type="match status" value="1"/>
</dbReference>
<dbReference type="Gene3D" id="1.20.1250.10">
    <property type="match status" value="1"/>
</dbReference>
<dbReference type="InterPro" id="IPR009079">
    <property type="entry name" value="4_helix_cytokine-like_core"/>
</dbReference>
<dbReference type="InterPro" id="IPR034975">
    <property type="entry name" value="Somatotropin"/>
</dbReference>
<dbReference type="InterPro" id="IPR001400">
    <property type="entry name" value="Somatotropin/Prolactin"/>
</dbReference>
<dbReference type="InterPro" id="IPR018116">
    <property type="entry name" value="Somatotropin_CS"/>
</dbReference>
<dbReference type="PANTHER" id="PTHR11417:SF2">
    <property type="entry name" value="SOMATOTROPIN"/>
    <property type="match status" value="1"/>
</dbReference>
<dbReference type="PANTHER" id="PTHR11417">
    <property type="entry name" value="SOMATOTROPIN,PROLACTIN"/>
    <property type="match status" value="1"/>
</dbReference>
<dbReference type="Pfam" id="PF00103">
    <property type="entry name" value="Hormone_1"/>
    <property type="match status" value="1"/>
</dbReference>
<dbReference type="PRINTS" id="PR00836">
    <property type="entry name" value="SOMATOTROPIN"/>
</dbReference>
<dbReference type="SUPFAM" id="SSF47266">
    <property type="entry name" value="4-helical cytokines"/>
    <property type="match status" value="1"/>
</dbReference>
<dbReference type="PROSITE" id="PS00266">
    <property type="entry name" value="SOMATOTROPIN_1"/>
    <property type="match status" value="1"/>
</dbReference>
<dbReference type="PROSITE" id="PS00338">
    <property type="entry name" value="SOMATOTROPIN_2"/>
    <property type="match status" value="1"/>
</dbReference>